<organism>
    <name type="scientific">Pseudomonas fluorescens (strain SBW25)</name>
    <dbReference type="NCBI Taxonomy" id="216595"/>
    <lineage>
        <taxon>Bacteria</taxon>
        <taxon>Pseudomonadati</taxon>
        <taxon>Pseudomonadota</taxon>
        <taxon>Gammaproteobacteria</taxon>
        <taxon>Pseudomonadales</taxon>
        <taxon>Pseudomonadaceae</taxon>
        <taxon>Pseudomonas</taxon>
    </lineage>
</organism>
<comment type="function">
    <text evidence="1">Catalyzes the ferrous insertion into protoporphyrin IX.</text>
</comment>
<comment type="catalytic activity">
    <reaction evidence="1">
        <text>heme b + 2 H(+) = protoporphyrin IX + Fe(2+)</text>
        <dbReference type="Rhea" id="RHEA:22584"/>
        <dbReference type="ChEBI" id="CHEBI:15378"/>
        <dbReference type="ChEBI" id="CHEBI:29033"/>
        <dbReference type="ChEBI" id="CHEBI:57306"/>
        <dbReference type="ChEBI" id="CHEBI:60344"/>
        <dbReference type="EC" id="4.98.1.1"/>
    </reaction>
</comment>
<comment type="pathway">
    <text evidence="1">Porphyrin-containing compound metabolism; protoheme biosynthesis; protoheme from protoporphyrin-IX: step 1/1.</text>
</comment>
<comment type="subcellular location">
    <subcellularLocation>
        <location evidence="1">Cytoplasm</location>
    </subcellularLocation>
</comment>
<comment type="similarity">
    <text evidence="1">Belongs to the ferrochelatase family.</text>
</comment>
<dbReference type="EC" id="4.98.1.1" evidence="1"/>
<dbReference type="EMBL" id="AM181176">
    <property type="protein sequence ID" value="CAY47024.1"/>
    <property type="molecule type" value="Genomic_DNA"/>
</dbReference>
<dbReference type="RefSeq" id="WP_012722128.1">
    <property type="nucleotide sequence ID" value="NC_012660.1"/>
</dbReference>
<dbReference type="SMR" id="C3KDN7"/>
<dbReference type="STRING" id="294.SRM1_04780"/>
<dbReference type="GeneID" id="93462372"/>
<dbReference type="PATRIC" id="fig|216595.4.peg.990"/>
<dbReference type="eggNOG" id="COG0276">
    <property type="taxonomic scope" value="Bacteria"/>
</dbReference>
<dbReference type="HOGENOM" id="CLU_018884_0_1_6"/>
<dbReference type="OrthoDB" id="9809741at2"/>
<dbReference type="UniPathway" id="UPA00252">
    <property type="reaction ID" value="UER00325"/>
</dbReference>
<dbReference type="GO" id="GO:0005737">
    <property type="term" value="C:cytoplasm"/>
    <property type="evidence" value="ECO:0007669"/>
    <property type="project" value="UniProtKB-SubCell"/>
</dbReference>
<dbReference type="GO" id="GO:0004325">
    <property type="term" value="F:ferrochelatase activity"/>
    <property type="evidence" value="ECO:0007669"/>
    <property type="project" value="UniProtKB-UniRule"/>
</dbReference>
<dbReference type="GO" id="GO:0046872">
    <property type="term" value="F:metal ion binding"/>
    <property type="evidence" value="ECO:0007669"/>
    <property type="project" value="UniProtKB-KW"/>
</dbReference>
<dbReference type="GO" id="GO:0006783">
    <property type="term" value="P:heme biosynthetic process"/>
    <property type="evidence" value="ECO:0007669"/>
    <property type="project" value="UniProtKB-UniRule"/>
</dbReference>
<dbReference type="CDD" id="cd00419">
    <property type="entry name" value="Ferrochelatase_C"/>
    <property type="match status" value="1"/>
</dbReference>
<dbReference type="CDD" id="cd03411">
    <property type="entry name" value="Ferrochelatase_N"/>
    <property type="match status" value="1"/>
</dbReference>
<dbReference type="Gene3D" id="3.40.50.1400">
    <property type="match status" value="2"/>
</dbReference>
<dbReference type="HAMAP" id="MF_00323">
    <property type="entry name" value="Ferrochelatase"/>
    <property type="match status" value="1"/>
</dbReference>
<dbReference type="InterPro" id="IPR001015">
    <property type="entry name" value="Ferrochelatase"/>
</dbReference>
<dbReference type="InterPro" id="IPR033644">
    <property type="entry name" value="Ferrochelatase_C"/>
</dbReference>
<dbReference type="InterPro" id="IPR033659">
    <property type="entry name" value="Ferrochelatase_N"/>
</dbReference>
<dbReference type="NCBIfam" id="TIGR00109">
    <property type="entry name" value="hemH"/>
    <property type="match status" value="1"/>
</dbReference>
<dbReference type="PANTHER" id="PTHR11108">
    <property type="entry name" value="FERROCHELATASE"/>
    <property type="match status" value="1"/>
</dbReference>
<dbReference type="PANTHER" id="PTHR11108:SF1">
    <property type="entry name" value="FERROCHELATASE, MITOCHONDRIAL"/>
    <property type="match status" value="1"/>
</dbReference>
<dbReference type="Pfam" id="PF00762">
    <property type="entry name" value="Ferrochelatase"/>
    <property type="match status" value="1"/>
</dbReference>
<dbReference type="SUPFAM" id="SSF53800">
    <property type="entry name" value="Chelatase"/>
    <property type="match status" value="1"/>
</dbReference>
<feature type="chain" id="PRO_1000205156" description="Ferrochelatase">
    <location>
        <begin position="1"/>
        <end position="341"/>
    </location>
</feature>
<feature type="binding site" evidence="1">
    <location>
        <position position="189"/>
    </location>
    <ligand>
        <name>Fe cation</name>
        <dbReference type="ChEBI" id="CHEBI:24875"/>
    </ligand>
</feature>
<feature type="binding site" evidence="1">
    <location>
        <position position="293"/>
    </location>
    <ligand>
        <name>Fe cation</name>
        <dbReference type="ChEBI" id="CHEBI:24875"/>
    </ligand>
</feature>
<reference key="1">
    <citation type="journal article" date="2009" name="Genome Biol.">
        <title>Genomic and genetic analyses of diversity and plant interactions of Pseudomonas fluorescens.</title>
        <authorList>
            <person name="Silby M.W."/>
            <person name="Cerdeno-Tarraga A.M."/>
            <person name="Vernikos G.S."/>
            <person name="Giddens S.R."/>
            <person name="Jackson R.W."/>
            <person name="Preston G.M."/>
            <person name="Zhang X.-X."/>
            <person name="Moon C.D."/>
            <person name="Gehrig S.M."/>
            <person name="Godfrey S.A.C."/>
            <person name="Knight C.G."/>
            <person name="Malone J.G."/>
            <person name="Robinson Z."/>
            <person name="Spiers A.J."/>
            <person name="Harris S."/>
            <person name="Challis G.L."/>
            <person name="Yaxley A.M."/>
            <person name="Harris D."/>
            <person name="Seeger K."/>
            <person name="Murphy L."/>
            <person name="Rutter S."/>
            <person name="Squares R."/>
            <person name="Quail M.A."/>
            <person name="Saunders E."/>
            <person name="Mavromatis K."/>
            <person name="Brettin T.S."/>
            <person name="Bentley S.D."/>
            <person name="Hothersall J."/>
            <person name="Stephens E."/>
            <person name="Thomas C.M."/>
            <person name="Parkhill J."/>
            <person name="Levy S.B."/>
            <person name="Rainey P.B."/>
            <person name="Thomson N.R."/>
        </authorList>
    </citation>
    <scope>NUCLEOTIDE SEQUENCE [LARGE SCALE GENOMIC DNA]</scope>
    <source>
        <strain>SBW25</strain>
    </source>
</reference>
<protein>
    <recommendedName>
        <fullName evidence="1">Ferrochelatase</fullName>
        <ecNumber evidence="1">4.98.1.1</ecNumber>
    </recommendedName>
    <alternativeName>
        <fullName evidence="1">Heme synthase</fullName>
    </alternativeName>
    <alternativeName>
        <fullName evidence="1">Protoheme ferro-lyase</fullName>
    </alternativeName>
</protein>
<keyword id="KW-0963">Cytoplasm</keyword>
<keyword id="KW-0350">Heme biosynthesis</keyword>
<keyword id="KW-0408">Iron</keyword>
<keyword id="KW-0456">Lyase</keyword>
<keyword id="KW-0479">Metal-binding</keyword>
<keyword id="KW-0627">Porphyrin biosynthesis</keyword>
<name>HEMH_PSEFS</name>
<accession>C3KDN7</accession>
<sequence>MTDHALLLVNLGSPASTSVADVRSYLNQFLMDPYVIDLPWPVRRLLVSLILIKRPEQSAHAYASIWWDEGSPLVVLSRRLQQQMTAQWTQGPVELAMRYGEPSIESVLTRLATQGIRNVTLAPLYPQFADSTVTTVIEEAKRVVRDKKLDVQFSILQPFYDQPEYLDALVASARPYVEQDYDHLLLSFHGLPERHLTKLDPTGQHCFKDADCCKNASAEVLKTCYRAQCFSVARDFAERMGLPEGKWSVAFQSRLGRAKWIEPYTEARLEALAQQGVKKLLVMCPAFVADCIETLEEIGDRGLEQFREAGGEELVLVPCLNDDPQWAKALNTLCERAPTAL</sequence>
<proteinExistence type="inferred from homology"/>
<evidence type="ECO:0000255" key="1">
    <source>
        <dbReference type="HAMAP-Rule" id="MF_00323"/>
    </source>
</evidence>
<gene>
    <name evidence="1" type="primary">hemH</name>
    <name type="ordered locus">PFLU_0756</name>
</gene>